<proteinExistence type="inferred from homology"/>
<gene>
    <name evidence="1" type="primary">secA</name>
    <name type="ordered locus">XfasM23_1959</name>
</gene>
<accession>B2I9A3</accession>
<protein>
    <recommendedName>
        <fullName evidence="1">Protein translocase subunit SecA</fullName>
        <ecNumber evidence="1">7.4.2.8</ecNumber>
    </recommendedName>
</protein>
<reference key="1">
    <citation type="journal article" date="2010" name="J. Bacteriol.">
        <title>Whole genome sequences of two Xylella fastidiosa strains (M12 and M23) causing almond leaf scorch disease in California.</title>
        <authorList>
            <person name="Chen J."/>
            <person name="Xie G."/>
            <person name="Han S."/>
            <person name="Chertkov O."/>
            <person name="Sims D."/>
            <person name="Civerolo E.L."/>
        </authorList>
    </citation>
    <scope>NUCLEOTIDE SEQUENCE [LARGE SCALE GENOMIC DNA]</scope>
    <source>
        <strain>M23</strain>
    </source>
</reference>
<keyword id="KW-0067">ATP-binding</keyword>
<keyword id="KW-0997">Cell inner membrane</keyword>
<keyword id="KW-1003">Cell membrane</keyword>
<keyword id="KW-0963">Cytoplasm</keyword>
<keyword id="KW-0472">Membrane</keyword>
<keyword id="KW-0479">Metal-binding</keyword>
<keyword id="KW-0547">Nucleotide-binding</keyword>
<keyword id="KW-0653">Protein transport</keyword>
<keyword id="KW-1278">Translocase</keyword>
<keyword id="KW-0811">Translocation</keyword>
<keyword id="KW-0813">Transport</keyword>
<keyword id="KW-0862">Zinc</keyword>
<organism>
    <name type="scientific">Xylella fastidiosa (strain M23)</name>
    <dbReference type="NCBI Taxonomy" id="405441"/>
    <lineage>
        <taxon>Bacteria</taxon>
        <taxon>Pseudomonadati</taxon>
        <taxon>Pseudomonadota</taxon>
        <taxon>Gammaproteobacteria</taxon>
        <taxon>Lysobacterales</taxon>
        <taxon>Lysobacteraceae</taxon>
        <taxon>Xylella</taxon>
    </lineage>
</organism>
<sequence>MINSLLTRLFGSRNERQLRQLNSIVAKINALEAELQKLSDTALQAKTTEFKQSIQDGKSLDKLLPEAFAVCREASRRVLGMRHYDVQLIGGMVLHLGKIAEMRTGEGKTLVATLPVYLNALAGKGVHVVTVNDYLARRDAAHMGRLYNWLGLSVGVVYPGMPHSDKHAAYGADITYGTNNEFGFDYLRDNMALSKADRYQRGLHYAIVDEVDSILIDEARTPLIISGPADESPDLYIRVNRIIPHLTRQENEEAEGDYWVDEKGKQVHLSEVGMERAEDLLRQAGILEEGDDSLYAAQNLSVVHHLNAALRAHALYQRDVDYIVRDGEVVIVDEFTGRTLAGRRWSDGLHQAIEAKEGVPVQRENQTLASITFQNLFRIYKKLSGMTGTADTEAYEFQSIYGLEVMVIPTNRPTVRKDYPDQVFLNRSSKFNAVLEDIKDCAKRGQPVLVGTTSIEISEMLSEHLRKARVKHEVLNAKQHEREATIVANAGLPGAVTIATNMAGRGTDIVLGGSLDTVLAELDPDATEEDRFRVKTAWNRRHEAVKAAGGLHIIGTERHESRRIDNQLRGRAGRQGDPGSSRFYLSLEDSLMRIFASEWVQKVMRLMGMKEGDVIEDRRVTRQIERAQRKVEAHNFDIRKNLLDYDDVNNEQRKVVYAQRDELLDAESIKENIDSIRHEVIDALVTRFVPEHSIDEQWDLPGLQATLQSEWGLHLPLIEMLKGREEVDAERIAFLVQDAVDKHCAEREASIGAETMRALEKHVMLTVLDQGWKEHLATMDYLRQGIHLRGYAQKQPKQEYKREAFELFSEMLEHVKREVIASLARVRIRSEEEMAALEEQERRQVDTLLRQSQFQHQEAGGYGTGDEAVSLQRQPAGQRAAIAQVIRDTPKVGRNDPCPCGSGKKYKHCHGLVT</sequence>
<comment type="function">
    <text evidence="1">Part of the Sec protein translocase complex. Interacts with the SecYEG preprotein conducting channel. Has a central role in coupling the hydrolysis of ATP to the transfer of proteins into and across the cell membrane, serving both as a receptor for the preprotein-SecB complex and as an ATP-driven molecular motor driving the stepwise translocation of polypeptide chains across the membrane.</text>
</comment>
<comment type="catalytic activity">
    <reaction evidence="1">
        <text>ATP + H2O + cellular proteinSide 1 = ADP + phosphate + cellular proteinSide 2.</text>
        <dbReference type="EC" id="7.4.2.8"/>
    </reaction>
</comment>
<comment type="cofactor">
    <cofactor evidence="1">
        <name>Zn(2+)</name>
        <dbReference type="ChEBI" id="CHEBI:29105"/>
    </cofactor>
    <text evidence="1">May bind 1 zinc ion per subunit.</text>
</comment>
<comment type="subunit">
    <text evidence="1">Monomer and homodimer. Part of the essential Sec protein translocation apparatus which comprises SecA, SecYEG and auxiliary proteins SecDF-YajC and YidC.</text>
</comment>
<comment type="subcellular location">
    <subcellularLocation>
        <location evidence="1">Cell inner membrane</location>
        <topology evidence="1">Peripheral membrane protein</topology>
        <orientation evidence="1">Cytoplasmic side</orientation>
    </subcellularLocation>
    <subcellularLocation>
        <location evidence="1">Cytoplasm</location>
    </subcellularLocation>
    <text evidence="1">Distribution is 50-50.</text>
</comment>
<comment type="similarity">
    <text evidence="1">Belongs to the SecA family.</text>
</comment>
<feature type="chain" id="PRO_1000145079" description="Protein translocase subunit SecA">
    <location>
        <begin position="1"/>
        <end position="914"/>
    </location>
</feature>
<feature type="binding site" evidence="1">
    <location>
        <position position="87"/>
    </location>
    <ligand>
        <name>ATP</name>
        <dbReference type="ChEBI" id="CHEBI:30616"/>
    </ligand>
</feature>
<feature type="binding site" evidence="1">
    <location>
        <begin position="105"/>
        <end position="109"/>
    </location>
    <ligand>
        <name>ATP</name>
        <dbReference type="ChEBI" id="CHEBI:30616"/>
    </ligand>
</feature>
<feature type="binding site" evidence="1">
    <location>
        <position position="508"/>
    </location>
    <ligand>
        <name>ATP</name>
        <dbReference type="ChEBI" id="CHEBI:30616"/>
    </ligand>
</feature>
<feature type="binding site" evidence="1">
    <location>
        <position position="898"/>
    </location>
    <ligand>
        <name>Zn(2+)</name>
        <dbReference type="ChEBI" id="CHEBI:29105"/>
    </ligand>
</feature>
<feature type="binding site" evidence="1">
    <location>
        <position position="900"/>
    </location>
    <ligand>
        <name>Zn(2+)</name>
        <dbReference type="ChEBI" id="CHEBI:29105"/>
    </ligand>
</feature>
<feature type="binding site" evidence="1">
    <location>
        <position position="909"/>
    </location>
    <ligand>
        <name>Zn(2+)</name>
        <dbReference type="ChEBI" id="CHEBI:29105"/>
    </ligand>
</feature>
<feature type="binding site" evidence="1">
    <location>
        <position position="910"/>
    </location>
    <ligand>
        <name>Zn(2+)</name>
        <dbReference type="ChEBI" id="CHEBI:29105"/>
    </ligand>
</feature>
<evidence type="ECO:0000255" key="1">
    <source>
        <dbReference type="HAMAP-Rule" id="MF_01382"/>
    </source>
</evidence>
<dbReference type="EC" id="7.4.2.8" evidence="1"/>
<dbReference type="EMBL" id="CP001011">
    <property type="protein sequence ID" value="ACB93358.1"/>
    <property type="molecule type" value="Genomic_DNA"/>
</dbReference>
<dbReference type="RefSeq" id="WP_004090521.1">
    <property type="nucleotide sequence ID" value="NC_010577.1"/>
</dbReference>
<dbReference type="SMR" id="B2I9A3"/>
<dbReference type="GeneID" id="93905716"/>
<dbReference type="KEGG" id="xfn:XfasM23_1959"/>
<dbReference type="HOGENOM" id="CLU_005314_3_0_6"/>
<dbReference type="Proteomes" id="UP000001698">
    <property type="component" value="Chromosome"/>
</dbReference>
<dbReference type="GO" id="GO:0031522">
    <property type="term" value="C:cell envelope Sec protein transport complex"/>
    <property type="evidence" value="ECO:0007669"/>
    <property type="project" value="TreeGrafter"/>
</dbReference>
<dbReference type="GO" id="GO:0005829">
    <property type="term" value="C:cytosol"/>
    <property type="evidence" value="ECO:0007669"/>
    <property type="project" value="TreeGrafter"/>
</dbReference>
<dbReference type="GO" id="GO:0005886">
    <property type="term" value="C:plasma membrane"/>
    <property type="evidence" value="ECO:0007669"/>
    <property type="project" value="UniProtKB-SubCell"/>
</dbReference>
<dbReference type="GO" id="GO:0005524">
    <property type="term" value="F:ATP binding"/>
    <property type="evidence" value="ECO:0007669"/>
    <property type="project" value="UniProtKB-UniRule"/>
</dbReference>
<dbReference type="GO" id="GO:0046872">
    <property type="term" value="F:metal ion binding"/>
    <property type="evidence" value="ECO:0007669"/>
    <property type="project" value="UniProtKB-KW"/>
</dbReference>
<dbReference type="GO" id="GO:0008564">
    <property type="term" value="F:protein-exporting ATPase activity"/>
    <property type="evidence" value="ECO:0007669"/>
    <property type="project" value="UniProtKB-EC"/>
</dbReference>
<dbReference type="GO" id="GO:0065002">
    <property type="term" value="P:intracellular protein transmembrane transport"/>
    <property type="evidence" value="ECO:0007669"/>
    <property type="project" value="UniProtKB-UniRule"/>
</dbReference>
<dbReference type="GO" id="GO:0017038">
    <property type="term" value="P:protein import"/>
    <property type="evidence" value="ECO:0007669"/>
    <property type="project" value="InterPro"/>
</dbReference>
<dbReference type="GO" id="GO:0006605">
    <property type="term" value="P:protein targeting"/>
    <property type="evidence" value="ECO:0007669"/>
    <property type="project" value="UniProtKB-UniRule"/>
</dbReference>
<dbReference type="GO" id="GO:0043952">
    <property type="term" value="P:protein transport by the Sec complex"/>
    <property type="evidence" value="ECO:0007669"/>
    <property type="project" value="TreeGrafter"/>
</dbReference>
<dbReference type="CDD" id="cd17928">
    <property type="entry name" value="DEXDc_SecA"/>
    <property type="match status" value="1"/>
</dbReference>
<dbReference type="CDD" id="cd18803">
    <property type="entry name" value="SF2_C_secA"/>
    <property type="match status" value="1"/>
</dbReference>
<dbReference type="FunFam" id="3.40.50.300:FF:000113">
    <property type="entry name" value="Preprotein translocase subunit SecA"/>
    <property type="match status" value="1"/>
</dbReference>
<dbReference type="FunFam" id="3.90.1440.10:FF:000001">
    <property type="entry name" value="Preprotein translocase subunit SecA"/>
    <property type="match status" value="1"/>
</dbReference>
<dbReference type="FunFam" id="1.10.3060.10:FF:000003">
    <property type="entry name" value="Protein translocase subunit SecA"/>
    <property type="match status" value="1"/>
</dbReference>
<dbReference type="FunFam" id="3.40.50.300:FF:000334">
    <property type="entry name" value="Protein translocase subunit SecA"/>
    <property type="match status" value="1"/>
</dbReference>
<dbReference type="Gene3D" id="1.10.3060.10">
    <property type="entry name" value="Helical scaffold and wing domains of SecA"/>
    <property type="match status" value="1"/>
</dbReference>
<dbReference type="Gene3D" id="3.40.50.300">
    <property type="entry name" value="P-loop containing nucleotide triphosphate hydrolases"/>
    <property type="match status" value="2"/>
</dbReference>
<dbReference type="Gene3D" id="3.90.1440.10">
    <property type="entry name" value="SecA, preprotein cross-linking domain"/>
    <property type="match status" value="1"/>
</dbReference>
<dbReference type="HAMAP" id="MF_01382">
    <property type="entry name" value="SecA"/>
    <property type="match status" value="1"/>
</dbReference>
<dbReference type="InterPro" id="IPR014001">
    <property type="entry name" value="Helicase_ATP-bd"/>
</dbReference>
<dbReference type="InterPro" id="IPR001650">
    <property type="entry name" value="Helicase_C-like"/>
</dbReference>
<dbReference type="InterPro" id="IPR027417">
    <property type="entry name" value="P-loop_NTPase"/>
</dbReference>
<dbReference type="InterPro" id="IPR004027">
    <property type="entry name" value="SEC_C_motif"/>
</dbReference>
<dbReference type="InterPro" id="IPR000185">
    <property type="entry name" value="SecA"/>
</dbReference>
<dbReference type="InterPro" id="IPR020937">
    <property type="entry name" value="SecA_CS"/>
</dbReference>
<dbReference type="InterPro" id="IPR011115">
    <property type="entry name" value="SecA_DEAD"/>
</dbReference>
<dbReference type="InterPro" id="IPR014018">
    <property type="entry name" value="SecA_motor_DEAD"/>
</dbReference>
<dbReference type="InterPro" id="IPR011130">
    <property type="entry name" value="SecA_preprotein_X-link_dom"/>
</dbReference>
<dbReference type="InterPro" id="IPR044722">
    <property type="entry name" value="SecA_SF2_C"/>
</dbReference>
<dbReference type="InterPro" id="IPR011116">
    <property type="entry name" value="SecA_Wing/Scaffold"/>
</dbReference>
<dbReference type="InterPro" id="IPR036266">
    <property type="entry name" value="SecA_Wing/Scaffold_sf"/>
</dbReference>
<dbReference type="InterPro" id="IPR036670">
    <property type="entry name" value="SecA_X-link_sf"/>
</dbReference>
<dbReference type="NCBIfam" id="NF009538">
    <property type="entry name" value="PRK12904.1"/>
    <property type="match status" value="1"/>
</dbReference>
<dbReference type="NCBIfam" id="TIGR00963">
    <property type="entry name" value="secA"/>
    <property type="match status" value="1"/>
</dbReference>
<dbReference type="PANTHER" id="PTHR30612:SF0">
    <property type="entry name" value="CHLOROPLAST PROTEIN-TRANSPORTING ATPASE"/>
    <property type="match status" value="1"/>
</dbReference>
<dbReference type="PANTHER" id="PTHR30612">
    <property type="entry name" value="SECA INNER MEMBRANE COMPONENT OF SEC PROTEIN SECRETION SYSTEM"/>
    <property type="match status" value="1"/>
</dbReference>
<dbReference type="Pfam" id="PF21090">
    <property type="entry name" value="P-loop_SecA"/>
    <property type="match status" value="1"/>
</dbReference>
<dbReference type="Pfam" id="PF02810">
    <property type="entry name" value="SEC-C"/>
    <property type="match status" value="1"/>
</dbReference>
<dbReference type="Pfam" id="PF07517">
    <property type="entry name" value="SecA_DEAD"/>
    <property type="match status" value="1"/>
</dbReference>
<dbReference type="Pfam" id="PF01043">
    <property type="entry name" value="SecA_PP_bind"/>
    <property type="match status" value="1"/>
</dbReference>
<dbReference type="Pfam" id="PF07516">
    <property type="entry name" value="SecA_SW"/>
    <property type="match status" value="1"/>
</dbReference>
<dbReference type="PRINTS" id="PR00906">
    <property type="entry name" value="SECA"/>
</dbReference>
<dbReference type="SMART" id="SM00957">
    <property type="entry name" value="SecA_DEAD"/>
    <property type="match status" value="1"/>
</dbReference>
<dbReference type="SMART" id="SM00958">
    <property type="entry name" value="SecA_PP_bind"/>
    <property type="match status" value="1"/>
</dbReference>
<dbReference type="SUPFAM" id="SSF81886">
    <property type="entry name" value="Helical scaffold and wing domains of SecA"/>
    <property type="match status" value="1"/>
</dbReference>
<dbReference type="SUPFAM" id="SSF52540">
    <property type="entry name" value="P-loop containing nucleoside triphosphate hydrolases"/>
    <property type="match status" value="2"/>
</dbReference>
<dbReference type="SUPFAM" id="SSF81767">
    <property type="entry name" value="Pre-protein crosslinking domain of SecA"/>
    <property type="match status" value="1"/>
</dbReference>
<dbReference type="PROSITE" id="PS01312">
    <property type="entry name" value="SECA"/>
    <property type="match status" value="1"/>
</dbReference>
<dbReference type="PROSITE" id="PS51196">
    <property type="entry name" value="SECA_MOTOR_DEAD"/>
    <property type="match status" value="1"/>
</dbReference>
<name>SECA_XYLF2</name>